<organismHost>
    <name type="scientific">Connochaetes taurinus</name>
    <name type="common">Blue wildebeest</name>
    <dbReference type="NCBI Taxonomy" id="9927"/>
</organismHost>
<feature type="chain" id="PRO_0000405742" description="DNA primase">
    <location>
        <begin position="1"/>
        <end position="837"/>
    </location>
</feature>
<feature type="zinc finger region" description="CHC2-type" evidence="1">
    <location>
        <begin position="782"/>
        <end position="821"/>
    </location>
</feature>
<feature type="site" description="Essential for primase activity" evidence="1">
    <location>
        <position position="498"/>
    </location>
</feature>
<feature type="site" description="Essential for primase activity" evidence="1">
    <location>
        <position position="500"/>
    </location>
</feature>
<proteinExistence type="inferred from homology"/>
<organism>
    <name type="scientific">Alcelaphine herpesvirus 1 (strain C500)</name>
    <name type="common">AlHV-1</name>
    <name type="synonym">Malignant catarrhal fever virus</name>
    <dbReference type="NCBI Taxonomy" id="654901"/>
    <lineage>
        <taxon>Viruses</taxon>
        <taxon>Duplodnaviria</taxon>
        <taxon>Heunggongvirae</taxon>
        <taxon>Peploviricota</taxon>
        <taxon>Herviviricetes</taxon>
        <taxon>Herpesvirales</taxon>
        <taxon>Orthoherpesviridae</taxon>
        <taxon>Gammaherpesvirinae</taxon>
        <taxon>Macavirus</taxon>
        <taxon>Macavirus alcelaphinegamma1</taxon>
    </lineage>
</organism>
<sequence>MTRVVKALFAADTDCAELLADILTGQNNSGSLYCLLHNCRPEDVSWEVTRLSLCLPVRRPGGAEGRCAEVFKIKLPTEEAGQFLFNCGSLSAKQVYESYSKRAAYETFQPILEVLGLSGDEYSIKNAVTWGRGKFVASLRKYFKLTTSPHWFINTFGAFENHFVLVSSCYYFFPVSVSTVDTLCHLAMLYSSKKGCPLSSITTLRELGAVATQSPALDRVENFYLYVCDKLARDTLECEAVDRCINEFRGQLMLSDQDLVHYIYLSFFQCFNNQKFLAYSQCTNPCNLNTTMLREPMLVANIDSDFKHKMATYYNKNTYLSNYVLLRGIHLHPVVGYGQECLRSAHATGGHSIWWGESHQVSDMLKTINVEYPDICLHEEFRGLMDLAAITDRCSIFGNPIHYLTDCATSGAIPIYRSELSHRHYFLAVFSDDIEYFWKKTIFLPPESFCLGAQDTMLTRAITYTEMHCSMSSVAEQIHVSRHEYFNPKLPVFNWVLDLDLPISEGNLHIDSIYSLCLLIRESVLDILKLLGPVEPDHEVFFFKSACINLCDPGEASWRPSTFCTCTEKLGMRVVTRFPPGICLKGSEPLTQLTKILNRVIKLGCGSLLNLSAFQLSNGPFDVGIYGRGRSIRLPHTYKVGKCGQLERLLKLFVCHPEATDKFPYLQNSLKLNRLLHHAQSQDPRGPLKIIYRVEDINEDFLYKHTQKQLPVKHEAVIPSIERLLDTSLNCFLLSKVWPKCFGTIRSYMSEEKLQQFSRVVFHPTNHCIVQVRPDRGNNFKCLRYNHRGSSKSVRVFLILHLKEETKLIVTFMSQCFANKCQSNKAMAHFSVFVDLS</sequence>
<reference key="1">
    <citation type="journal article" date="1997" name="J. Virol.">
        <title>Primary structure of the alcelaphine herpesvirus 1 genome.</title>
        <authorList>
            <person name="Ensser A."/>
            <person name="Pflanz R."/>
            <person name="Fleckenstein B."/>
        </authorList>
    </citation>
    <scope>NUCLEOTIDE SEQUENCE [LARGE SCALE GENOMIC DNA]</scope>
</reference>
<protein>
    <recommendedName>
        <fullName evidence="1">DNA primase</fullName>
        <ecNumber evidence="1">2.7.7.-</ecNumber>
    </recommendedName>
</protein>
<keyword id="KW-0235">DNA replication</keyword>
<keyword id="KW-1048">Host nucleus</keyword>
<keyword id="KW-0479">Metal-binding</keyword>
<keyword id="KW-1185">Reference proteome</keyword>
<keyword id="KW-0808">Transferase</keyword>
<keyword id="KW-0862">Zinc</keyword>
<keyword id="KW-0863">Zinc-finger</keyword>
<evidence type="ECO:0000255" key="1">
    <source>
        <dbReference type="HAMAP-Rule" id="MF_04011"/>
    </source>
</evidence>
<gene>
    <name type="primary">56</name>
</gene>
<dbReference type="EC" id="2.7.7.-" evidence="1"/>
<dbReference type="EMBL" id="AF005370">
    <property type="protein sequence ID" value="AAC58103.1"/>
    <property type="molecule type" value="Genomic_DNA"/>
</dbReference>
<dbReference type="PIR" id="T03151">
    <property type="entry name" value="T03151"/>
</dbReference>
<dbReference type="RefSeq" id="NP_065555.1">
    <property type="nucleotide sequence ID" value="NC_002531.1"/>
</dbReference>
<dbReference type="KEGG" id="vg:911780"/>
<dbReference type="Proteomes" id="UP000000941">
    <property type="component" value="Segment"/>
</dbReference>
<dbReference type="GO" id="GO:0042025">
    <property type="term" value="C:host cell nucleus"/>
    <property type="evidence" value="ECO:0007669"/>
    <property type="project" value="UniProtKB-SubCell"/>
</dbReference>
<dbReference type="GO" id="GO:0003899">
    <property type="term" value="F:DNA-directed RNA polymerase activity"/>
    <property type="evidence" value="ECO:0007669"/>
    <property type="project" value="InterPro"/>
</dbReference>
<dbReference type="GO" id="GO:0008270">
    <property type="term" value="F:zinc ion binding"/>
    <property type="evidence" value="ECO:0007669"/>
    <property type="project" value="UniProtKB-KW"/>
</dbReference>
<dbReference type="GO" id="GO:0039686">
    <property type="term" value="P:bidirectional double-stranded viral DNA replication"/>
    <property type="evidence" value="ECO:0007669"/>
    <property type="project" value="InterPro"/>
</dbReference>
<dbReference type="GO" id="GO:0006260">
    <property type="term" value="P:DNA replication"/>
    <property type="evidence" value="ECO:0007669"/>
    <property type="project" value="UniProtKB-KW"/>
</dbReference>
<dbReference type="HAMAP" id="MF_04011">
    <property type="entry name" value="HSV_PRIM"/>
    <property type="match status" value="1"/>
</dbReference>
<dbReference type="InterPro" id="IPR033685">
    <property type="entry name" value="HSV_PRIM"/>
</dbReference>
<dbReference type="Pfam" id="PF03121">
    <property type="entry name" value="Herpes_UL52"/>
    <property type="match status" value="1"/>
</dbReference>
<comment type="function">
    <text evidence="1">Essential component of the helicase/primase complex. Unwinds the DNA at the replication forks and generates single-stranded DNA for both leading and lagging strand synthesis. The primase initiates primer synthesis and thereby produces large amount of short RNA primers on the lagging strand that the polymerase elongates using dNTPs.</text>
</comment>
<comment type="subunit">
    <text evidence="1">Associates with the helicase and the primase-associated factor to form the helicase-primase factor.</text>
</comment>
<comment type="subcellular location">
    <subcellularLocation>
        <location evidence="1">Host nucleus</location>
    </subcellularLocation>
    <text evidence="1">Requires the presence of the primase associated factor to properly localize in the host cell nucleus.</text>
</comment>
<comment type="similarity">
    <text evidence="1">Belongs to the herpesviridae DNA primase family.</text>
</comment>
<accession>O36406</accession>
<name>PRIM_ALHV1</name>